<comment type="function">
    <text evidence="1">Catalyzes the reversible cyclization of carbamoyl aspartate to dihydroorotate.</text>
</comment>
<comment type="catalytic activity">
    <reaction evidence="1">
        <text>(S)-dihydroorotate + H2O = N-carbamoyl-L-aspartate + H(+)</text>
        <dbReference type="Rhea" id="RHEA:24296"/>
        <dbReference type="ChEBI" id="CHEBI:15377"/>
        <dbReference type="ChEBI" id="CHEBI:15378"/>
        <dbReference type="ChEBI" id="CHEBI:30864"/>
        <dbReference type="ChEBI" id="CHEBI:32814"/>
        <dbReference type="EC" id="3.5.2.3"/>
    </reaction>
</comment>
<comment type="cofactor">
    <cofactor evidence="1">
        <name>Zn(2+)</name>
        <dbReference type="ChEBI" id="CHEBI:29105"/>
    </cofactor>
    <text evidence="1">Binds 2 Zn(2+) ions per subunit.</text>
</comment>
<comment type="pathway">
    <text evidence="1">Pyrimidine metabolism; UMP biosynthesis via de novo pathway; (S)-dihydroorotate from bicarbonate: step 3/3.</text>
</comment>
<comment type="similarity">
    <text evidence="1">Belongs to the metallo-dependent hydrolases superfamily. DHOase family. Class I DHOase subfamily.</text>
</comment>
<gene>
    <name evidence="1" type="primary">pyrC</name>
    <name type="ordered locus">AnaeK_2241</name>
</gene>
<accession>B4UDQ2</accession>
<proteinExistence type="inferred from homology"/>
<protein>
    <recommendedName>
        <fullName evidence="1">Dihydroorotase</fullName>
        <shortName evidence="1">DHOase</shortName>
        <ecNumber evidence="1">3.5.2.3</ecNumber>
    </recommendedName>
</protein>
<reference key="1">
    <citation type="submission" date="2008-08" db="EMBL/GenBank/DDBJ databases">
        <title>Complete sequence of Anaeromyxobacter sp. K.</title>
        <authorList>
            <consortium name="US DOE Joint Genome Institute"/>
            <person name="Lucas S."/>
            <person name="Copeland A."/>
            <person name="Lapidus A."/>
            <person name="Glavina del Rio T."/>
            <person name="Dalin E."/>
            <person name="Tice H."/>
            <person name="Bruce D."/>
            <person name="Goodwin L."/>
            <person name="Pitluck S."/>
            <person name="Saunders E."/>
            <person name="Brettin T."/>
            <person name="Detter J.C."/>
            <person name="Han C."/>
            <person name="Larimer F."/>
            <person name="Land M."/>
            <person name="Hauser L."/>
            <person name="Kyrpides N."/>
            <person name="Ovchinnikiva G."/>
            <person name="Beliaev A."/>
        </authorList>
    </citation>
    <scope>NUCLEOTIDE SEQUENCE [LARGE SCALE GENOMIC DNA]</scope>
    <source>
        <strain>K</strain>
    </source>
</reference>
<name>PYRC_ANASK</name>
<feature type="chain" id="PRO_1000100070" description="Dihydroorotase">
    <location>
        <begin position="1"/>
        <end position="433"/>
    </location>
</feature>
<feature type="active site" evidence="1">
    <location>
        <position position="310"/>
    </location>
</feature>
<feature type="binding site" evidence="1">
    <location>
        <position position="63"/>
    </location>
    <ligand>
        <name>Zn(2+)</name>
        <dbReference type="ChEBI" id="CHEBI:29105"/>
        <label>1</label>
    </ligand>
</feature>
<feature type="binding site" evidence="1">
    <location>
        <begin position="65"/>
        <end position="67"/>
    </location>
    <ligand>
        <name>substrate</name>
    </ligand>
</feature>
<feature type="binding site" evidence="1">
    <location>
        <position position="65"/>
    </location>
    <ligand>
        <name>Zn(2+)</name>
        <dbReference type="ChEBI" id="CHEBI:29105"/>
        <label>1</label>
    </ligand>
</feature>
<feature type="binding site" evidence="1">
    <location>
        <position position="97"/>
    </location>
    <ligand>
        <name>substrate</name>
    </ligand>
</feature>
<feature type="binding site" evidence="1">
    <location>
        <position position="155"/>
    </location>
    <ligand>
        <name>Zn(2+)</name>
        <dbReference type="ChEBI" id="CHEBI:29105"/>
        <label>1</label>
    </ligand>
</feature>
<feature type="binding site" evidence="1">
    <location>
        <position position="155"/>
    </location>
    <ligand>
        <name>Zn(2+)</name>
        <dbReference type="ChEBI" id="CHEBI:29105"/>
        <label>2</label>
    </ligand>
</feature>
<feature type="binding site" evidence="1">
    <location>
        <position position="182"/>
    </location>
    <ligand>
        <name>Zn(2+)</name>
        <dbReference type="ChEBI" id="CHEBI:29105"/>
        <label>2</label>
    </ligand>
</feature>
<feature type="binding site" evidence="1">
    <location>
        <position position="235"/>
    </location>
    <ligand>
        <name>Zn(2+)</name>
        <dbReference type="ChEBI" id="CHEBI:29105"/>
        <label>2</label>
    </ligand>
</feature>
<feature type="binding site" evidence="1">
    <location>
        <position position="283"/>
    </location>
    <ligand>
        <name>substrate</name>
    </ligand>
</feature>
<feature type="binding site" evidence="1">
    <location>
        <position position="310"/>
    </location>
    <ligand>
        <name>Zn(2+)</name>
        <dbReference type="ChEBI" id="CHEBI:29105"/>
        <label>1</label>
    </ligand>
</feature>
<feature type="binding site" evidence="1">
    <location>
        <position position="314"/>
    </location>
    <ligand>
        <name>substrate</name>
    </ligand>
</feature>
<sequence>MSDVLFIEGGRVIDPASGVDGVRTVVIRDGKVAEVAERVERPRDARAVDARNRWVTPGFVDLHVHLREPGQEYKETVATGARAAVAGGFTAVCAMPNTKPVNDCAAVTELVLARAAAAGLARVYPVGAISRGSNGEELAEYGELKASGCVALSDDGRPVMSSALMRRALEYARAFGLPLTVHEEDLHLVGKGVMHEGAAATRLGLKGIPSQAEDVMVLRDIALVELTGGRLHVAHVSTAGAVRAIREAKRRGLPVTGEVTPHHLALTDDDVGASGYSTDFKMNPPLRSAEDVRACREGLADGTLDAIATDHAPHSAVEKDVEFDAAANGIVGLETAFSVCLGLVREGALTERRLVEALTVGPARAFGLPAGTLARGAAADVAVLDAAAEWTVDPARLHSKGRNTPWKGRRLAGRCTHTIVGGRIVHEEGKADR</sequence>
<dbReference type="EC" id="3.5.2.3" evidence="1"/>
<dbReference type="EMBL" id="CP001131">
    <property type="protein sequence ID" value="ACG73468.1"/>
    <property type="molecule type" value="Genomic_DNA"/>
</dbReference>
<dbReference type="RefSeq" id="WP_012526267.1">
    <property type="nucleotide sequence ID" value="NC_011145.1"/>
</dbReference>
<dbReference type="SMR" id="B4UDQ2"/>
<dbReference type="KEGG" id="ank:AnaeK_2241"/>
<dbReference type="HOGENOM" id="CLU_015572_1_0_7"/>
<dbReference type="OrthoDB" id="9803027at2"/>
<dbReference type="UniPathway" id="UPA00070">
    <property type="reaction ID" value="UER00117"/>
</dbReference>
<dbReference type="Proteomes" id="UP000001871">
    <property type="component" value="Chromosome"/>
</dbReference>
<dbReference type="GO" id="GO:0005737">
    <property type="term" value="C:cytoplasm"/>
    <property type="evidence" value="ECO:0007669"/>
    <property type="project" value="TreeGrafter"/>
</dbReference>
<dbReference type="GO" id="GO:0004038">
    <property type="term" value="F:allantoinase activity"/>
    <property type="evidence" value="ECO:0007669"/>
    <property type="project" value="TreeGrafter"/>
</dbReference>
<dbReference type="GO" id="GO:0004151">
    <property type="term" value="F:dihydroorotase activity"/>
    <property type="evidence" value="ECO:0007669"/>
    <property type="project" value="UniProtKB-UniRule"/>
</dbReference>
<dbReference type="GO" id="GO:0008270">
    <property type="term" value="F:zinc ion binding"/>
    <property type="evidence" value="ECO:0007669"/>
    <property type="project" value="UniProtKB-UniRule"/>
</dbReference>
<dbReference type="GO" id="GO:0044205">
    <property type="term" value="P:'de novo' UMP biosynthetic process"/>
    <property type="evidence" value="ECO:0007669"/>
    <property type="project" value="UniProtKB-UniRule"/>
</dbReference>
<dbReference type="GO" id="GO:0006145">
    <property type="term" value="P:purine nucleobase catabolic process"/>
    <property type="evidence" value="ECO:0007669"/>
    <property type="project" value="TreeGrafter"/>
</dbReference>
<dbReference type="CDD" id="cd01317">
    <property type="entry name" value="DHOase_IIa"/>
    <property type="match status" value="1"/>
</dbReference>
<dbReference type="Gene3D" id="3.20.20.140">
    <property type="entry name" value="Metal-dependent hydrolases"/>
    <property type="match status" value="1"/>
</dbReference>
<dbReference type="Gene3D" id="2.30.40.10">
    <property type="entry name" value="Urease, subunit C, domain 1"/>
    <property type="match status" value="1"/>
</dbReference>
<dbReference type="HAMAP" id="MF_00220_B">
    <property type="entry name" value="PyrC_classI_B"/>
    <property type="match status" value="1"/>
</dbReference>
<dbReference type="InterPro" id="IPR006680">
    <property type="entry name" value="Amidohydro-rel"/>
</dbReference>
<dbReference type="InterPro" id="IPR004722">
    <property type="entry name" value="DHOase"/>
</dbReference>
<dbReference type="InterPro" id="IPR050138">
    <property type="entry name" value="DHOase/Allantoinase_Hydrolase"/>
</dbReference>
<dbReference type="InterPro" id="IPR002195">
    <property type="entry name" value="Dihydroorotase_CS"/>
</dbReference>
<dbReference type="InterPro" id="IPR011059">
    <property type="entry name" value="Metal-dep_hydrolase_composite"/>
</dbReference>
<dbReference type="InterPro" id="IPR032466">
    <property type="entry name" value="Metal_Hydrolase"/>
</dbReference>
<dbReference type="NCBIfam" id="TIGR00857">
    <property type="entry name" value="pyrC_multi"/>
    <property type="match status" value="1"/>
</dbReference>
<dbReference type="PANTHER" id="PTHR43668">
    <property type="entry name" value="ALLANTOINASE"/>
    <property type="match status" value="1"/>
</dbReference>
<dbReference type="PANTHER" id="PTHR43668:SF2">
    <property type="entry name" value="ALLANTOINASE"/>
    <property type="match status" value="1"/>
</dbReference>
<dbReference type="Pfam" id="PF01979">
    <property type="entry name" value="Amidohydro_1"/>
    <property type="match status" value="1"/>
</dbReference>
<dbReference type="SUPFAM" id="SSF51338">
    <property type="entry name" value="Composite domain of metallo-dependent hydrolases"/>
    <property type="match status" value="1"/>
</dbReference>
<dbReference type="SUPFAM" id="SSF51556">
    <property type="entry name" value="Metallo-dependent hydrolases"/>
    <property type="match status" value="1"/>
</dbReference>
<dbReference type="PROSITE" id="PS00482">
    <property type="entry name" value="DIHYDROOROTASE_1"/>
    <property type="match status" value="1"/>
</dbReference>
<dbReference type="PROSITE" id="PS00483">
    <property type="entry name" value="DIHYDROOROTASE_2"/>
    <property type="match status" value="1"/>
</dbReference>
<keyword id="KW-0378">Hydrolase</keyword>
<keyword id="KW-0479">Metal-binding</keyword>
<keyword id="KW-0665">Pyrimidine biosynthesis</keyword>
<keyword id="KW-0862">Zinc</keyword>
<organism>
    <name type="scientific">Anaeromyxobacter sp. (strain K)</name>
    <dbReference type="NCBI Taxonomy" id="447217"/>
    <lineage>
        <taxon>Bacteria</taxon>
        <taxon>Pseudomonadati</taxon>
        <taxon>Myxococcota</taxon>
        <taxon>Myxococcia</taxon>
        <taxon>Myxococcales</taxon>
        <taxon>Cystobacterineae</taxon>
        <taxon>Anaeromyxobacteraceae</taxon>
        <taxon>Anaeromyxobacter</taxon>
    </lineage>
</organism>
<evidence type="ECO:0000255" key="1">
    <source>
        <dbReference type="HAMAP-Rule" id="MF_00220"/>
    </source>
</evidence>